<gene>
    <name evidence="1" type="primary">bamC</name>
    <name type="ordered locus">Rahaq_3263</name>
</gene>
<accession>E8XP36</accession>
<keyword id="KW-0998">Cell outer membrane</keyword>
<keyword id="KW-0449">Lipoprotein</keyword>
<keyword id="KW-0472">Membrane</keyword>
<keyword id="KW-0564">Palmitate</keyword>
<keyword id="KW-0732">Signal</keyword>
<name>BAMC_RAHSY</name>
<reference key="1">
    <citation type="submission" date="2011-01" db="EMBL/GenBank/DDBJ databases">
        <title>Complete sequence of chromosome of Rahnella sp. Y9602.</title>
        <authorList>
            <consortium name="US DOE Joint Genome Institute"/>
            <person name="Lucas S."/>
            <person name="Copeland A."/>
            <person name="Lapidus A."/>
            <person name="Cheng J.-F."/>
            <person name="Goodwin L."/>
            <person name="Pitluck S."/>
            <person name="Lu M."/>
            <person name="Detter J.C."/>
            <person name="Han C."/>
            <person name="Tapia R."/>
            <person name="Land M."/>
            <person name="Hauser L."/>
            <person name="Kyrpides N."/>
            <person name="Ivanova N."/>
            <person name="Ovchinnikova G."/>
            <person name="Pagani I."/>
            <person name="Sobecky P.A."/>
            <person name="Martinez R.J."/>
            <person name="Woyke T."/>
        </authorList>
    </citation>
    <scope>NUCLEOTIDE SEQUENCE [LARGE SCALE GENOMIC DNA]</scope>
    <source>
        <strain>Y9602</strain>
    </source>
</reference>
<comment type="function">
    <text evidence="1">Part of the outer membrane protein assembly complex, which is involved in assembly and insertion of beta-barrel proteins into the outer membrane.</text>
</comment>
<comment type="subunit">
    <text evidence="1">Part of the Bam complex, which is composed of the outer membrane protein BamA, and four lipoproteins BamB, BamC, BamD and BamE.</text>
</comment>
<comment type="subcellular location">
    <subcellularLocation>
        <location evidence="1">Cell outer membrane</location>
        <topology evidence="1">Lipid-anchor</topology>
    </subcellularLocation>
</comment>
<comment type="similarity">
    <text evidence="1">Belongs to the BamC family.</text>
</comment>
<feature type="signal peptide" evidence="1">
    <location>
        <begin position="1"/>
        <end position="34"/>
    </location>
</feature>
<feature type="chain" id="PRO_0000417822" description="Outer membrane protein assembly factor BamC">
    <location>
        <begin position="35"/>
        <end position="359"/>
    </location>
</feature>
<feature type="lipid moiety-binding region" description="N-palmitoyl cysteine" evidence="1">
    <location>
        <position position="35"/>
    </location>
</feature>
<feature type="lipid moiety-binding region" description="S-diacylglycerol cysteine" evidence="1">
    <location>
        <position position="35"/>
    </location>
</feature>
<dbReference type="EMBL" id="CP002505">
    <property type="protein sequence ID" value="ADW74857.1"/>
    <property type="molecule type" value="Genomic_DNA"/>
</dbReference>
<dbReference type="RefSeq" id="WP_013576552.1">
    <property type="nucleotide sequence ID" value="NZ_JAFMPD010000180.1"/>
</dbReference>
<dbReference type="SMR" id="E8XP36"/>
<dbReference type="KEGG" id="rah:Rahaq_3263"/>
<dbReference type="eggNOG" id="COG3317">
    <property type="taxonomic scope" value="Bacteria"/>
</dbReference>
<dbReference type="HOGENOM" id="CLU_063217_1_0_6"/>
<dbReference type="OrthoDB" id="5686855at2"/>
<dbReference type="Proteomes" id="UP000007257">
    <property type="component" value="Chromosome"/>
</dbReference>
<dbReference type="GO" id="GO:0009279">
    <property type="term" value="C:cell outer membrane"/>
    <property type="evidence" value="ECO:0007669"/>
    <property type="project" value="UniProtKB-SubCell"/>
</dbReference>
<dbReference type="GO" id="GO:0043165">
    <property type="term" value="P:Gram-negative-bacterium-type cell outer membrane assembly"/>
    <property type="evidence" value="ECO:0007669"/>
    <property type="project" value="UniProtKB-UniRule"/>
</dbReference>
<dbReference type="GO" id="GO:0051205">
    <property type="term" value="P:protein insertion into membrane"/>
    <property type="evidence" value="ECO:0007669"/>
    <property type="project" value="UniProtKB-UniRule"/>
</dbReference>
<dbReference type="Gene3D" id="3.30.530.50">
    <property type="match status" value="1"/>
</dbReference>
<dbReference type="Gene3D" id="3.30.310.170">
    <property type="entry name" value="Outer membrane protein assembly factor BamC"/>
    <property type="match status" value="1"/>
</dbReference>
<dbReference type="HAMAP" id="MF_00924">
    <property type="entry name" value="OM_assembly_BamC"/>
    <property type="match status" value="1"/>
</dbReference>
<dbReference type="InterPro" id="IPR014524">
    <property type="entry name" value="BamC"/>
</dbReference>
<dbReference type="InterPro" id="IPR042268">
    <property type="entry name" value="BamC_C"/>
</dbReference>
<dbReference type="InterPro" id="IPR010653">
    <property type="entry name" value="NlpB/DapX"/>
</dbReference>
<dbReference type="NCBIfam" id="NF008674">
    <property type="entry name" value="PRK11679.1"/>
    <property type="match status" value="1"/>
</dbReference>
<dbReference type="Pfam" id="PF06804">
    <property type="entry name" value="Lipoprotein_18"/>
    <property type="match status" value="1"/>
</dbReference>
<dbReference type="PIRSF" id="PIRSF026343">
    <property type="entry name" value="NlpB"/>
    <property type="match status" value="1"/>
</dbReference>
<dbReference type="PROSITE" id="PS51257">
    <property type="entry name" value="PROKAR_LIPOPROTEIN"/>
    <property type="match status" value="1"/>
</dbReference>
<sequence>MASLFDKNSFQMTRLQKTAVAKVVGVSLIMLLAACSSDQRYKRQVSGDEAYLDASGLHELKAPVGMILPVQNGTYEVQAGSMQGAVGKQLDIRPPSQPLALLSGSQTQFSGNSSTVLLENTAQNRDLWNNVVKAVEQNNFKIANRDDANQTLTTDFVDWNRADEDFQYQGRYQISVKQQSYQLALTVKTLELKQQDKPVTSSAEIQRYNSQMMNAITANLDKVQQDTQARLDNRRVGEIDVQSGADDTGLPVLIVRESYGVVWDRLPNALTKVGMKVTDSSRPQGTLSVTYKPLNDDAWQTLGAKDPGLTSGDYKLQVGDLDNRSSLQFLDPKGHALSQSQNDAMVAVMQAAFSQSNAK</sequence>
<organism>
    <name type="scientific">Rahnella sp. (strain Y9602)</name>
    <dbReference type="NCBI Taxonomy" id="2703885"/>
    <lineage>
        <taxon>Bacteria</taxon>
        <taxon>Pseudomonadati</taxon>
        <taxon>Pseudomonadota</taxon>
        <taxon>Gammaproteobacteria</taxon>
        <taxon>Enterobacterales</taxon>
        <taxon>Yersiniaceae</taxon>
        <taxon>Rahnella</taxon>
    </lineage>
</organism>
<evidence type="ECO:0000255" key="1">
    <source>
        <dbReference type="HAMAP-Rule" id="MF_00924"/>
    </source>
</evidence>
<protein>
    <recommendedName>
        <fullName evidence="1">Outer membrane protein assembly factor BamC</fullName>
    </recommendedName>
</protein>
<proteinExistence type="inferred from homology"/>